<protein>
    <recommendedName>
        <fullName evidence="1">Sulfurtransferase TusD</fullName>
        <ecNumber evidence="1">2.8.1.-</ecNumber>
    </recommendedName>
    <alternativeName>
        <fullName evidence="1">tRNA 2-thiouridine synthesizing protein D</fullName>
    </alternativeName>
</protein>
<accession>A8AQN3</accession>
<reference key="1">
    <citation type="submission" date="2007-08" db="EMBL/GenBank/DDBJ databases">
        <authorList>
            <consortium name="The Citrobacter koseri Genome Sequencing Project"/>
            <person name="McClelland M."/>
            <person name="Sanderson E.K."/>
            <person name="Porwollik S."/>
            <person name="Spieth J."/>
            <person name="Clifton W.S."/>
            <person name="Latreille P."/>
            <person name="Courtney L."/>
            <person name="Wang C."/>
            <person name="Pepin K."/>
            <person name="Bhonagiri V."/>
            <person name="Nash W."/>
            <person name="Johnson M."/>
            <person name="Thiruvilangam P."/>
            <person name="Wilson R."/>
        </authorList>
    </citation>
    <scope>NUCLEOTIDE SEQUENCE [LARGE SCALE GENOMIC DNA]</scope>
    <source>
        <strain>ATCC BAA-895 / CDC 4225-83 / SGSC4696</strain>
    </source>
</reference>
<organism>
    <name type="scientific">Citrobacter koseri (strain ATCC BAA-895 / CDC 4225-83 / SGSC4696)</name>
    <dbReference type="NCBI Taxonomy" id="290338"/>
    <lineage>
        <taxon>Bacteria</taxon>
        <taxon>Pseudomonadati</taxon>
        <taxon>Pseudomonadota</taxon>
        <taxon>Gammaproteobacteria</taxon>
        <taxon>Enterobacterales</taxon>
        <taxon>Enterobacteriaceae</taxon>
        <taxon>Citrobacter</taxon>
    </lineage>
</organism>
<feature type="chain" id="PRO_1000013250" description="Sulfurtransferase TusD">
    <location>
        <begin position="1"/>
        <end position="128"/>
    </location>
</feature>
<feature type="active site" description="Cysteine persulfide intermediate" evidence="1">
    <location>
        <position position="78"/>
    </location>
</feature>
<sequence>MRFAIVVTGPAYGTQQASSALQFAHALVNEGHELSSVFFYREGVYNANQLTSPASDEFDLVRAWQQLGAQHGVALNICVAAALRRGIVDETEAKRLALASANLQPGFSLSGLGALAEASLTCDRVVQF</sequence>
<keyword id="KW-0963">Cytoplasm</keyword>
<keyword id="KW-1185">Reference proteome</keyword>
<keyword id="KW-0808">Transferase</keyword>
<keyword id="KW-0819">tRNA processing</keyword>
<dbReference type="EC" id="2.8.1.-" evidence="1"/>
<dbReference type="EMBL" id="CP000822">
    <property type="protein sequence ID" value="ABV15796.1"/>
    <property type="molecule type" value="Genomic_DNA"/>
</dbReference>
<dbReference type="RefSeq" id="WP_012135438.1">
    <property type="nucleotide sequence ID" value="NC_009792.1"/>
</dbReference>
<dbReference type="SMR" id="A8AQN3"/>
<dbReference type="STRING" id="290338.CKO_04751"/>
<dbReference type="GeneID" id="45138263"/>
<dbReference type="KEGG" id="cko:CKO_04751"/>
<dbReference type="HOGENOM" id="CLU_132095_0_0_6"/>
<dbReference type="OrthoDB" id="9787483at2"/>
<dbReference type="Proteomes" id="UP000008148">
    <property type="component" value="Chromosome"/>
</dbReference>
<dbReference type="GO" id="GO:1990228">
    <property type="term" value="C:sulfurtransferase complex"/>
    <property type="evidence" value="ECO:0007669"/>
    <property type="project" value="TreeGrafter"/>
</dbReference>
<dbReference type="GO" id="GO:0097163">
    <property type="term" value="F:sulfur carrier activity"/>
    <property type="evidence" value="ECO:0007669"/>
    <property type="project" value="TreeGrafter"/>
</dbReference>
<dbReference type="GO" id="GO:0016783">
    <property type="term" value="F:sulfurtransferase activity"/>
    <property type="evidence" value="ECO:0007669"/>
    <property type="project" value="UniProtKB-UniRule"/>
</dbReference>
<dbReference type="GO" id="GO:0002143">
    <property type="term" value="P:tRNA wobble position uridine thiolation"/>
    <property type="evidence" value="ECO:0007669"/>
    <property type="project" value="TreeGrafter"/>
</dbReference>
<dbReference type="FunFam" id="3.40.1260.10:FF:000001">
    <property type="entry name" value="Sulfurtransferase TusD"/>
    <property type="match status" value="1"/>
</dbReference>
<dbReference type="Gene3D" id="3.40.1260.10">
    <property type="entry name" value="DsrEFH-like"/>
    <property type="match status" value="1"/>
</dbReference>
<dbReference type="HAMAP" id="MF_00390">
    <property type="entry name" value="Thiourid_synth_D"/>
    <property type="match status" value="1"/>
</dbReference>
<dbReference type="InterPro" id="IPR027396">
    <property type="entry name" value="DsrEFH-like"/>
</dbReference>
<dbReference type="InterPro" id="IPR003787">
    <property type="entry name" value="Sulphur_relay_DsrE/F-like"/>
</dbReference>
<dbReference type="InterPro" id="IPR017463">
    <property type="entry name" value="Sulphur_relay_TusD/DsrE"/>
</dbReference>
<dbReference type="NCBIfam" id="NF001237">
    <property type="entry name" value="PRK00207.1"/>
    <property type="match status" value="1"/>
</dbReference>
<dbReference type="NCBIfam" id="TIGR03012">
    <property type="entry name" value="sulf_tusD_dsrE"/>
    <property type="match status" value="1"/>
</dbReference>
<dbReference type="PANTHER" id="PTHR34874">
    <property type="entry name" value="PROTEIN YCHN"/>
    <property type="match status" value="1"/>
</dbReference>
<dbReference type="PANTHER" id="PTHR34874:SF3">
    <property type="entry name" value="SULFURTRANSFERASE TUSD"/>
    <property type="match status" value="1"/>
</dbReference>
<dbReference type="Pfam" id="PF02635">
    <property type="entry name" value="DsrE"/>
    <property type="match status" value="1"/>
</dbReference>
<dbReference type="SUPFAM" id="SSF75169">
    <property type="entry name" value="DsrEFH-like"/>
    <property type="match status" value="1"/>
</dbReference>
<proteinExistence type="inferred from homology"/>
<comment type="function">
    <text evidence="1">Part of a sulfur-relay system required for 2-thiolation of 5-methylaminomethyl-2-thiouridine (mnm(5)s(2)U) at tRNA wobble positions. Accepts sulfur from TusA and transfers it in turn to TusE.</text>
</comment>
<comment type="subunit">
    <text evidence="1">Heterohexamer, formed by a dimer of trimers. The hexameric TusBCD complex contains 2 copies each of TusB, TusC and TusD. The TusBCD complex interacts with TusE.</text>
</comment>
<comment type="subcellular location">
    <subcellularLocation>
        <location evidence="1">Cytoplasm</location>
    </subcellularLocation>
</comment>
<comment type="similarity">
    <text evidence="1">Belongs to the DsrE/TusD family.</text>
</comment>
<name>TUSD_CITK8</name>
<gene>
    <name evidence="1" type="primary">tusD</name>
    <name type="ordered locus">CKO_04751</name>
</gene>
<evidence type="ECO:0000255" key="1">
    <source>
        <dbReference type="HAMAP-Rule" id="MF_00390"/>
    </source>
</evidence>